<protein>
    <recommendedName>
        <fullName>Uncharacterized 35.5 kDa protein in transposon Tn4556</fullName>
    </recommendedName>
</protein>
<name>YT35_STRFR</name>
<proteinExistence type="predicted"/>
<keyword id="KW-0814">Transposable element</keyword>
<feature type="chain" id="PRO_0000066518" description="Uncharacterized 35.5 kDa protein in transposon Tn4556">
    <location>
        <begin position="1"/>
        <end position="348"/>
    </location>
</feature>
<feature type="region of interest" description="Disordered" evidence="1">
    <location>
        <begin position="132"/>
        <end position="348"/>
    </location>
</feature>
<feature type="compositionally biased region" description="Low complexity" evidence="1">
    <location>
        <begin position="161"/>
        <end position="178"/>
    </location>
</feature>
<feature type="compositionally biased region" description="Polar residues" evidence="1">
    <location>
        <begin position="192"/>
        <end position="207"/>
    </location>
</feature>
<feature type="compositionally biased region" description="Low complexity" evidence="1">
    <location>
        <begin position="227"/>
        <end position="273"/>
    </location>
</feature>
<feature type="compositionally biased region" description="Pro residues" evidence="1">
    <location>
        <begin position="274"/>
        <end position="287"/>
    </location>
</feature>
<feature type="compositionally biased region" description="Low complexity" evidence="1">
    <location>
        <begin position="288"/>
        <end position="310"/>
    </location>
</feature>
<evidence type="ECO:0000256" key="1">
    <source>
        <dbReference type="SAM" id="MobiDB-lite"/>
    </source>
</evidence>
<accession>P20186</accession>
<reference key="1">
    <citation type="journal article" date="1990" name="Gene">
        <title>Nucleotide sequence of Streptomyces fradiae transposable element Tn4556: a class-II transposon related to Tn3.</title>
        <authorList>
            <person name="Siemieniak D.R."/>
            <person name="Slightom J.L."/>
            <person name="Chung S.T."/>
        </authorList>
    </citation>
    <scope>NUCLEOTIDE SEQUENCE [GENOMIC DNA]</scope>
    <source>
        <transposon>Tn4556</transposon>
    </source>
</reference>
<organism>
    <name type="scientific">Streptomyces fradiae</name>
    <name type="common">Streptomyces roseoflavus</name>
    <dbReference type="NCBI Taxonomy" id="1906"/>
    <lineage>
        <taxon>Bacteria</taxon>
        <taxon>Bacillati</taxon>
        <taxon>Actinomycetota</taxon>
        <taxon>Actinomycetes</taxon>
        <taxon>Kitasatosporales</taxon>
        <taxon>Streptomycetaceae</taxon>
        <taxon>Streptomyces</taxon>
    </lineage>
</organism>
<dbReference type="EMBL" id="M29297">
    <property type="protein sequence ID" value="AAA88561.1"/>
    <property type="molecule type" value="Genomic_DNA"/>
</dbReference>
<dbReference type="PIR" id="JQ0431">
    <property type="entry name" value="JQ0431"/>
</dbReference>
<dbReference type="PROSITE" id="PS51257">
    <property type="entry name" value="PROKAR_LIPOPROTEIN"/>
    <property type="match status" value="1"/>
</dbReference>
<sequence length="348" mass="35521">MARHASSASESSGGVSSNSAAIAAASSCRGTTCSMAAHIPSRLSTFGGGISPVSVSTCSLVVSNTTWNAVANFADARSTRGRDFSFSFALSRSALASSFVAISTSSRSSASSTARDVRYTVVASSVARRRASECRRSSDALPSTPYRDSSASRRGGIRDTSTAPIPNAAISSARSSARFICGPDTRTGPRLSRSSSETRSPGGTVQPKSPAPLAARCSASRAGCPTAAGSLLPAPRPPASSASSPQAAAPAAPSATRLPRRTTPSAPRPSSRPARPPIPAARPPPRRTPGTPRPAAARARAPAGCSPARRTPSAPTDRRCRAARRGSPRPPAARPPGRQGTRRDSARL</sequence>